<organism>
    <name type="scientific">Saccharomyces cerevisiae (strain ATCC 204508 / S288c)</name>
    <name type="common">Baker's yeast</name>
    <dbReference type="NCBI Taxonomy" id="559292"/>
    <lineage>
        <taxon>Eukaryota</taxon>
        <taxon>Fungi</taxon>
        <taxon>Dikarya</taxon>
        <taxon>Ascomycota</taxon>
        <taxon>Saccharomycotina</taxon>
        <taxon>Saccharomycetes</taxon>
        <taxon>Saccharomycetales</taxon>
        <taxon>Saccharomycetaceae</taxon>
        <taxon>Saccharomyces</taxon>
    </lineage>
</organism>
<accession>P39677</accession>
<accession>D6VW82</accession>
<reference key="1">
    <citation type="submission" date="1994-01" db="EMBL/GenBank/DDBJ databases">
        <title>The yeast nuclear Mef2 gene encodes a second mitochondrial EF-G-like protein.</title>
        <authorList>
            <person name="Welcsh P.L."/>
            <person name="Johnson D.R."/>
            <person name="Breitenberger C.A."/>
        </authorList>
    </citation>
    <scope>NUCLEOTIDE SEQUENCE [GENOMIC DNA]</scope>
</reference>
<reference key="2">
    <citation type="journal article" date="1995" name="Yeast">
        <title>A 37.5 kb region of yeast chromosome X includes the SME1, MEF2, GSH1 and CSD3 genes, a TCP-1-related gene, an open reading frame similar to the DAL80 gene, and a tRNA(Arg).</title>
        <authorList>
            <person name="Rasmussen S.W."/>
        </authorList>
    </citation>
    <scope>NUCLEOTIDE SEQUENCE [GENOMIC DNA]</scope>
    <source>
        <strain>ATCC 96604 / S288c / FY1679</strain>
    </source>
</reference>
<reference key="3">
    <citation type="journal article" date="1996" name="EMBO J.">
        <title>Complete nucleotide sequence of Saccharomyces cerevisiae chromosome X.</title>
        <authorList>
            <person name="Galibert F."/>
            <person name="Alexandraki D."/>
            <person name="Baur A."/>
            <person name="Boles E."/>
            <person name="Chalwatzis N."/>
            <person name="Chuat J.-C."/>
            <person name="Coster F."/>
            <person name="Cziepluch C."/>
            <person name="de Haan M."/>
            <person name="Domdey H."/>
            <person name="Durand P."/>
            <person name="Entian K.-D."/>
            <person name="Gatius M."/>
            <person name="Goffeau A."/>
            <person name="Grivell L.A."/>
            <person name="Hennemann A."/>
            <person name="Herbert C.J."/>
            <person name="Heumann K."/>
            <person name="Hilger F."/>
            <person name="Hollenberg C.P."/>
            <person name="Huang M.-E."/>
            <person name="Jacq C."/>
            <person name="Jauniaux J.-C."/>
            <person name="Katsoulou C."/>
            <person name="Kirchrath L."/>
            <person name="Kleine K."/>
            <person name="Kordes E."/>
            <person name="Koetter P."/>
            <person name="Liebl S."/>
            <person name="Louis E.J."/>
            <person name="Manus V."/>
            <person name="Mewes H.-W."/>
            <person name="Miosga T."/>
            <person name="Obermaier B."/>
            <person name="Perea J."/>
            <person name="Pohl T.M."/>
            <person name="Portetelle D."/>
            <person name="Pujol A."/>
            <person name="Purnelle B."/>
            <person name="Ramezani Rad M."/>
            <person name="Rasmussen S.W."/>
            <person name="Rose M."/>
            <person name="Rossau R."/>
            <person name="Schaaff-Gerstenschlaeger I."/>
            <person name="Smits P.H.M."/>
            <person name="Scarcez T."/>
            <person name="Soriano N."/>
            <person name="To Van D."/>
            <person name="Tzermia M."/>
            <person name="Van Broekhoven A."/>
            <person name="Vandenbol M."/>
            <person name="Wedler H."/>
            <person name="von Wettstein D."/>
            <person name="Wambutt R."/>
            <person name="Zagulski M."/>
            <person name="Zollner A."/>
            <person name="Karpfinger-Hartl L."/>
        </authorList>
    </citation>
    <scope>NUCLEOTIDE SEQUENCE [LARGE SCALE GENOMIC DNA]</scope>
    <source>
        <strain>ATCC 204508 / S288c</strain>
    </source>
</reference>
<reference key="4">
    <citation type="journal article" date="2014" name="G3 (Bethesda)">
        <title>The reference genome sequence of Saccharomyces cerevisiae: Then and now.</title>
        <authorList>
            <person name="Engel S.R."/>
            <person name="Dietrich F.S."/>
            <person name="Fisk D.G."/>
            <person name="Binkley G."/>
            <person name="Balakrishnan R."/>
            <person name="Costanzo M.C."/>
            <person name="Dwight S.S."/>
            <person name="Hitz B.C."/>
            <person name="Karra K."/>
            <person name="Nash R.S."/>
            <person name="Weng S."/>
            <person name="Wong E.D."/>
            <person name="Lloyd P."/>
            <person name="Skrzypek M.S."/>
            <person name="Miyasato S.R."/>
            <person name="Simison M."/>
            <person name="Cherry J.M."/>
        </authorList>
    </citation>
    <scope>GENOME REANNOTATION</scope>
    <source>
        <strain>ATCC 204508 / S288c</strain>
    </source>
</reference>
<reference key="5">
    <citation type="journal article" date="2003" name="Nature">
        <title>Global analysis of protein localization in budding yeast.</title>
        <authorList>
            <person name="Huh W.-K."/>
            <person name="Falvo J.V."/>
            <person name="Gerke L.C."/>
            <person name="Carroll A.S."/>
            <person name="Howson R.W."/>
            <person name="Weissman J.S."/>
            <person name="O'Shea E.K."/>
        </authorList>
    </citation>
    <scope>SUBCELLULAR LOCATION [LARGE SCALE ANALYSIS]</scope>
</reference>
<reference key="6">
    <citation type="journal article" date="2003" name="Nature">
        <title>Global analysis of protein expression in yeast.</title>
        <authorList>
            <person name="Ghaemmaghami S."/>
            <person name="Huh W.-K."/>
            <person name="Bower K."/>
            <person name="Howson R.W."/>
            <person name="Belle A."/>
            <person name="Dephoure N."/>
            <person name="O'Shea E.K."/>
            <person name="Weissman J.S."/>
        </authorList>
    </citation>
    <scope>LEVEL OF PROTEIN EXPRESSION [LARGE SCALE ANALYSIS]</scope>
</reference>
<reference key="7">
    <citation type="journal article" date="2003" name="Proc. Natl. Acad. Sci. U.S.A.">
        <title>The proteome of Saccharomyces cerevisiae mitochondria.</title>
        <authorList>
            <person name="Sickmann A."/>
            <person name="Reinders J."/>
            <person name="Wagner Y."/>
            <person name="Joppich C."/>
            <person name="Zahedi R.P."/>
            <person name="Meyer H.E."/>
            <person name="Schoenfisch B."/>
            <person name="Perschil I."/>
            <person name="Chacinska A."/>
            <person name="Guiard B."/>
            <person name="Rehling P."/>
            <person name="Pfanner N."/>
            <person name="Meisinger C."/>
        </authorList>
    </citation>
    <scope>SUBCELLULAR LOCATION [LARGE SCALE ANALYSIS]</scope>
    <source>
        <strain>ATCC 76625 / YPH499</strain>
    </source>
</reference>
<reference key="8">
    <citation type="journal article" date="2011" name="FEBS Lett.">
        <title>The MEF2 gene is essential for yeast longevity, with a dual role in cell respiration and maintenance of mitochondrial membrane potential.</title>
        <authorList>
            <person name="Callegari S."/>
            <person name="McKinnon R.A."/>
            <person name="Andrews S."/>
            <person name="de Barros Lopes M.A."/>
        </authorList>
    </citation>
    <scope>FUNCTION</scope>
    <scope>DISRUPTION PHENOTYPE</scope>
</reference>
<name>RRF2M_YEAST</name>
<evidence type="ECO:0000255" key="1">
    <source>
        <dbReference type="HAMAP-Rule" id="MF_03059"/>
    </source>
</evidence>
<evidence type="ECO:0000269" key="2">
    <source>
    </source>
</evidence>
<evidence type="ECO:0000269" key="3">
    <source>
    </source>
</evidence>
<evidence type="ECO:0000269" key="4">
    <source>
    </source>
</evidence>
<evidence type="ECO:0000269" key="5">
    <source>
    </source>
</evidence>
<keyword id="KW-0342">GTP-binding</keyword>
<keyword id="KW-0496">Mitochondrion</keyword>
<keyword id="KW-0547">Nucleotide-binding</keyword>
<keyword id="KW-0648">Protein biosynthesis</keyword>
<keyword id="KW-1185">Reference proteome</keyword>
<keyword id="KW-0809">Transit peptide</keyword>
<protein>
    <recommendedName>
        <fullName evidence="1">Ribosome-releasing factor 2, mitochondrial</fullName>
        <shortName evidence="1">RRF2mt</shortName>
    </recommendedName>
    <alternativeName>
        <fullName evidence="1">Elongation factor G 2, mitochondrial</fullName>
        <shortName evidence="1">EF-G2mt</shortName>
        <shortName evidence="1">mEF-G 2</shortName>
    </alternativeName>
</protein>
<gene>
    <name evidence="1" type="primary">MEF2</name>
    <name type="ordered locus">YJL102W</name>
    <name type="ORF">D819</name>
    <name type="ORF">J0826</name>
</gene>
<proteinExistence type="evidence at protein level"/>
<feature type="transit peptide" description="Mitochondrion" evidence="1">
    <location>
        <begin position="1"/>
        <end position="30"/>
    </location>
</feature>
<feature type="chain" id="PRO_0000007453" description="Ribosome-releasing factor 2, mitochondrial">
    <location>
        <begin position="31"/>
        <end position="819"/>
    </location>
</feature>
<feature type="domain" description="tr-type G">
    <location>
        <begin position="39"/>
        <end position="327"/>
    </location>
</feature>
<feature type="binding site" evidence="1">
    <location>
        <begin position="48"/>
        <end position="55"/>
    </location>
    <ligand>
        <name>GTP</name>
        <dbReference type="ChEBI" id="CHEBI:37565"/>
    </ligand>
</feature>
<feature type="binding site" evidence="1">
    <location>
        <begin position="113"/>
        <end position="117"/>
    </location>
    <ligand>
        <name>GTP</name>
        <dbReference type="ChEBI" id="CHEBI:37565"/>
    </ligand>
</feature>
<feature type="binding site" evidence="1">
    <location>
        <begin position="165"/>
        <end position="168"/>
    </location>
    <ligand>
        <name>GTP</name>
        <dbReference type="ChEBI" id="CHEBI:37565"/>
    </ligand>
</feature>
<comment type="function">
    <text evidence="1 5">Mitochondrial GTPase that mediates the disassembly of ribosomes from messenger RNA at the termination of mitochondrial protein biosynthesis. Not involved in the GTP-dependent ribosomal translocation step during translation elongation (By similarity). Required for respiratory growth and essential for mitochondrial genome maintenance.</text>
</comment>
<comment type="subcellular location">
    <subcellularLocation>
        <location evidence="1 2 4">Mitochondrion</location>
    </subcellularLocation>
</comment>
<comment type="disruption phenotype">
    <text evidence="5">Results in loss of mitochondrial DNA. Causes a significant slow growth phenotype under normal growth conditions (glucose) and a reduced chronological life-span (CLS). Growth on a non-fermentable carbon source (gylcerol) is absent.</text>
</comment>
<comment type="miscellaneous">
    <text evidence="3">Present with 1733 molecules/cell in log phase SD medium.</text>
</comment>
<comment type="similarity">
    <text evidence="1">Belongs to the TRAFAC class translation factor GTPase superfamily. Classic translation factor GTPase family. EF-G/EF-2 subfamily.</text>
</comment>
<sequence length="819" mass="91283">MWKWNVRRWAGARVNISKNRLSVINVGSRYLSTARSPLSKVRNIGIIAHIDAGKTTTTERMLYYAGISKHIGDVDTGDTITDFLEQERSRGITIQSAAISFPWRNTFAINLIDTPGHIDFTFEVIRALKVIDSCVVILDAVAGVEAQTEKVWKQSKSKPKICFINKMDRMGASFNHTVNDLINKFMRGTTTKPVLVNIPYYRKQPTSNDYVFQGVIDVVNGKRLTWNPENPDEIIVDELDGTSLEQCNRCRESMIETLTEYDEDLVQHFLEEAEGDYSKVSAQFLNASIRKLTMKNMIVPVLCGASFKNIGVQPLLDAIVNYLPSPIEAELPELNDKTVPMKYDPKVGCLVNNNKNLCIALAFKVITDPIRGKQIFIRIYSGTLNSGNTVYNSTTGEKFKLGKLLIPHAGTSQPVNILTAGQIGLLTGSTVENNISTGDTLITHSSKKDGLKSLDKKKELTLKINSIFIPPPVFGVSIEPRTLSNKKSMEEALNTLITEDPSLSISQNDETGQTVLNGMGELHLEIAKDRLVNDLKADVEFGQLMVSYKETINSETNIETYESDDGYRFSLSLLPNSDALPNCLAYPLGVNENFLIMEKNGNWDKEWKYQVSFESILNSIIASCIVGLQRGGKIANFPLYACSIKINSDWSVPPDIETPQEILKITRNLIFKALNDLKPEKYNLLEPIMNLDLTIPQSDVGTVLQDLTGARKAQILSIEDESSVSNSGASTCNSPENSNRIYIPSDAVTTLHATKDKKNTQETSSNVKKIIKAKVPLREITTYTNKLRSLSQGRGEFNIEYSDMEKVTNDRLQSILHDL</sequence>
<dbReference type="EMBL" id="L25088">
    <property type="protein sequence ID" value="AAB59315.1"/>
    <property type="molecule type" value="Genomic_DNA"/>
</dbReference>
<dbReference type="EMBL" id="X85021">
    <property type="protein sequence ID" value="CAA59392.1"/>
    <property type="molecule type" value="Genomic_DNA"/>
</dbReference>
<dbReference type="EMBL" id="Z49377">
    <property type="protein sequence ID" value="CAA89397.1"/>
    <property type="molecule type" value="Genomic_DNA"/>
</dbReference>
<dbReference type="EMBL" id="BK006943">
    <property type="protein sequence ID" value="DAA08698.1"/>
    <property type="molecule type" value="Genomic_DNA"/>
</dbReference>
<dbReference type="PIR" id="S43748">
    <property type="entry name" value="S43748"/>
</dbReference>
<dbReference type="RefSeq" id="NP_012433.1">
    <property type="nucleotide sequence ID" value="NM_001181535.1"/>
</dbReference>
<dbReference type="SMR" id="P39677"/>
<dbReference type="BioGRID" id="33654">
    <property type="interactions" value="301"/>
</dbReference>
<dbReference type="DIP" id="DIP-2761N"/>
<dbReference type="FunCoup" id="P39677">
    <property type="interactions" value="742"/>
</dbReference>
<dbReference type="IntAct" id="P39677">
    <property type="interactions" value="2"/>
</dbReference>
<dbReference type="MINT" id="P39677"/>
<dbReference type="STRING" id="4932.YJL102W"/>
<dbReference type="iPTMnet" id="P39677"/>
<dbReference type="PaxDb" id="4932-YJL102W"/>
<dbReference type="PeptideAtlas" id="P39677"/>
<dbReference type="EnsemblFungi" id="YJL102W_mRNA">
    <property type="protein sequence ID" value="YJL102W"/>
    <property type="gene ID" value="YJL102W"/>
</dbReference>
<dbReference type="GeneID" id="853342"/>
<dbReference type="KEGG" id="sce:YJL102W"/>
<dbReference type="AGR" id="SGD:S000003638"/>
<dbReference type="SGD" id="S000003638">
    <property type="gene designation" value="MEF2"/>
</dbReference>
<dbReference type="VEuPathDB" id="FungiDB:YJL102W"/>
<dbReference type="eggNOG" id="KOG0465">
    <property type="taxonomic scope" value="Eukaryota"/>
</dbReference>
<dbReference type="GeneTree" id="ENSGT00550000074890"/>
<dbReference type="HOGENOM" id="CLU_002794_4_1_1"/>
<dbReference type="InParanoid" id="P39677"/>
<dbReference type="OMA" id="GPQFTFP"/>
<dbReference type="OrthoDB" id="198619at2759"/>
<dbReference type="BioCyc" id="YEAST:G3O-31556-MONOMER"/>
<dbReference type="BioGRID-ORCS" id="853342">
    <property type="hits" value="1 hit in 10 CRISPR screens"/>
</dbReference>
<dbReference type="PRO" id="PR:P39677"/>
<dbReference type="Proteomes" id="UP000002311">
    <property type="component" value="Chromosome X"/>
</dbReference>
<dbReference type="RNAct" id="P39677">
    <property type="molecule type" value="protein"/>
</dbReference>
<dbReference type="GO" id="GO:0005829">
    <property type="term" value="C:cytosol"/>
    <property type="evidence" value="ECO:0007005"/>
    <property type="project" value="SGD"/>
</dbReference>
<dbReference type="GO" id="GO:0005739">
    <property type="term" value="C:mitochondrion"/>
    <property type="evidence" value="ECO:0007005"/>
    <property type="project" value="SGD"/>
</dbReference>
<dbReference type="GO" id="GO:0005525">
    <property type="term" value="F:GTP binding"/>
    <property type="evidence" value="ECO:0007669"/>
    <property type="project" value="UniProtKB-UniRule"/>
</dbReference>
<dbReference type="GO" id="GO:0003924">
    <property type="term" value="F:GTPase activity"/>
    <property type="evidence" value="ECO:0000250"/>
    <property type="project" value="SGD"/>
</dbReference>
<dbReference type="GO" id="GO:0000002">
    <property type="term" value="P:mitochondrial genome maintenance"/>
    <property type="evidence" value="ECO:0000315"/>
    <property type="project" value="SGD"/>
</dbReference>
<dbReference type="GO" id="GO:0032543">
    <property type="term" value="P:mitochondrial translation"/>
    <property type="evidence" value="ECO:0000250"/>
    <property type="project" value="SGD"/>
</dbReference>
<dbReference type="GO" id="GO:0051881">
    <property type="term" value="P:regulation of mitochondrial membrane potential"/>
    <property type="evidence" value="ECO:0000315"/>
    <property type="project" value="SGD"/>
</dbReference>
<dbReference type="GO" id="GO:0032790">
    <property type="term" value="P:ribosome disassembly"/>
    <property type="evidence" value="ECO:0000250"/>
    <property type="project" value="SGD"/>
</dbReference>
<dbReference type="CDD" id="cd01886">
    <property type="entry name" value="EF-G"/>
    <property type="match status" value="1"/>
</dbReference>
<dbReference type="CDD" id="cd16262">
    <property type="entry name" value="EFG_III"/>
    <property type="match status" value="1"/>
</dbReference>
<dbReference type="CDD" id="cd03713">
    <property type="entry name" value="EFG_mtEFG_C"/>
    <property type="match status" value="1"/>
</dbReference>
<dbReference type="CDD" id="cd04092">
    <property type="entry name" value="mtEFG2_II_like"/>
    <property type="match status" value="1"/>
</dbReference>
<dbReference type="FunFam" id="2.40.30.10:FF:000166">
    <property type="entry name" value="Ribosome-releasing factor 2, mitochondrial"/>
    <property type="match status" value="1"/>
</dbReference>
<dbReference type="FunFam" id="3.30.70.240:FF:000024">
    <property type="entry name" value="Ribosome-releasing factor 2, mitochondrial"/>
    <property type="match status" value="1"/>
</dbReference>
<dbReference type="FunFam" id="3.30.70.870:FF:000007">
    <property type="entry name" value="Ribosome-releasing factor 2, mitochondrial"/>
    <property type="match status" value="1"/>
</dbReference>
<dbReference type="FunFam" id="3.40.50.300:FF:001636">
    <property type="entry name" value="Ribosome-releasing factor 2, mitochondrial"/>
    <property type="match status" value="1"/>
</dbReference>
<dbReference type="Gene3D" id="3.30.70.240">
    <property type="match status" value="1"/>
</dbReference>
<dbReference type="Gene3D" id="3.30.70.870">
    <property type="entry name" value="Elongation Factor G (Translational Gtpase), domain 3"/>
    <property type="match status" value="1"/>
</dbReference>
<dbReference type="Gene3D" id="3.40.50.300">
    <property type="entry name" value="P-loop containing nucleotide triphosphate hydrolases"/>
    <property type="match status" value="1"/>
</dbReference>
<dbReference type="Gene3D" id="2.40.30.10">
    <property type="entry name" value="Translation factors"/>
    <property type="match status" value="1"/>
</dbReference>
<dbReference type="HAMAP" id="MF_03059">
    <property type="entry name" value="mEF_G_2"/>
    <property type="match status" value="1"/>
</dbReference>
<dbReference type="InterPro" id="IPR030851">
    <property type="entry name" value="EFG2"/>
</dbReference>
<dbReference type="InterPro" id="IPR041095">
    <property type="entry name" value="EFG_II"/>
</dbReference>
<dbReference type="InterPro" id="IPR009022">
    <property type="entry name" value="EFG_III"/>
</dbReference>
<dbReference type="InterPro" id="IPR035647">
    <property type="entry name" value="EFG_III/V"/>
</dbReference>
<dbReference type="InterPro" id="IPR035649">
    <property type="entry name" value="EFG_V"/>
</dbReference>
<dbReference type="InterPro" id="IPR000640">
    <property type="entry name" value="EFG_V-like"/>
</dbReference>
<dbReference type="InterPro" id="IPR004161">
    <property type="entry name" value="EFTu-like_2"/>
</dbReference>
<dbReference type="InterPro" id="IPR031157">
    <property type="entry name" value="G_TR_CS"/>
</dbReference>
<dbReference type="InterPro" id="IPR027417">
    <property type="entry name" value="P-loop_NTPase"/>
</dbReference>
<dbReference type="InterPro" id="IPR005225">
    <property type="entry name" value="Small_GTP-bd"/>
</dbReference>
<dbReference type="InterPro" id="IPR000795">
    <property type="entry name" value="T_Tr_GTP-bd_dom"/>
</dbReference>
<dbReference type="InterPro" id="IPR009000">
    <property type="entry name" value="Transl_B-barrel_sf"/>
</dbReference>
<dbReference type="NCBIfam" id="TIGR00231">
    <property type="entry name" value="small_GTP"/>
    <property type="match status" value="1"/>
</dbReference>
<dbReference type="PANTHER" id="PTHR43261:SF1">
    <property type="entry name" value="RIBOSOME-RELEASING FACTOR 2, MITOCHONDRIAL"/>
    <property type="match status" value="1"/>
</dbReference>
<dbReference type="PANTHER" id="PTHR43261">
    <property type="entry name" value="TRANSLATION ELONGATION FACTOR G-RELATED"/>
    <property type="match status" value="1"/>
</dbReference>
<dbReference type="Pfam" id="PF00679">
    <property type="entry name" value="EFG_C"/>
    <property type="match status" value="1"/>
</dbReference>
<dbReference type="Pfam" id="PF14492">
    <property type="entry name" value="EFG_III"/>
    <property type="match status" value="1"/>
</dbReference>
<dbReference type="Pfam" id="PF00009">
    <property type="entry name" value="GTP_EFTU"/>
    <property type="match status" value="1"/>
</dbReference>
<dbReference type="Pfam" id="PF03144">
    <property type="entry name" value="GTP_EFTU_D2"/>
    <property type="match status" value="1"/>
</dbReference>
<dbReference type="PRINTS" id="PR00315">
    <property type="entry name" value="ELONGATNFCT"/>
</dbReference>
<dbReference type="SMART" id="SM00838">
    <property type="entry name" value="EFG_C"/>
    <property type="match status" value="1"/>
</dbReference>
<dbReference type="SUPFAM" id="SSF54980">
    <property type="entry name" value="EF-G C-terminal domain-like"/>
    <property type="match status" value="2"/>
</dbReference>
<dbReference type="SUPFAM" id="SSF52540">
    <property type="entry name" value="P-loop containing nucleoside triphosphate hydrolases"/>
    <property type="match status" value="1"/>
</dbReference>
<dbReference type="SUPFAM" id="SSF50447">
    <property type="entry name" value="Translation proteins"/>
    <property type="match status" value="1"/>
</dbReference>
<dbReference type="PROSITE" id="PS00301">
    <property type="entry name" value="G_TR_1"/>
    <property type="match status" value="1"/>
</dbReference>
<dbReference type="PROSITE" id="PS51722">
    <property type="entry name" value="G_TR_2"/>
    <property type="match status" value="1"/>
</dbReference>